<dbReference type="EMBL" id="X61207">
    <property type="protein sequence ID" value="CAA43521.1"/>
    <property type="molecule type" value="Genomic_DNA"/>
</dbReference>
<dbReference type="PIR" id="S16804">
    <property type="entry name" value="S16804"/>
</dbReference>
<dbReference type="RefSeq" id="WP_014238910.1">
    <property type="nucleotide sequence ID" value="NZ_WFKD01000020.1"/>
</dbReference>
<dbReference type="SMR" id="P26724"/>
<dbReference type="GeneID" id="56449786"/>
<dbReference type="OrthoDB" id="9784774at2"/>
<dbReference type="GO" id="GO:0003824">
    <property type="term" value="F:catalytic activity"/>
    <property type="evidence" value="ECO:0007669"/>
    <property type="project" value="InterPro"/>
</dbReference>
<dbReference type="CDD" id="cd01276">
    <property type="entry name" value="PKCI_related"/>
    <property type="match status" value="1"/>
</dbReference>
<dbReference type="Gene3D" id="3.30.428.10">
    <property type="entry name" value="HIT-like"/>
    <property type="match status" value="1"/>
</dbReference>
<dbReference type="InterPro" id="IPR019808">
    <property type="entry name" value="Histidine_triad_CS"/>
</dbReference>
<dbReference type="InterPro" id="IPR001310">
    <property type="entry name" value="Histidine_triad_HIT"/>
</dbReference>
<dbReference type="InterPro" id="IPR011146">
    <property type="entry name" value="HIT-like"/>
</dbReference>
<dbReference type="InterPro" id="IPR036265">
    <property type="entry name" value="HIT-like_sf"/>
</dbReference>
<dbReference type="PANTHER" id="PTHR23089">
    <property type="entry name" value="HISTIDINE TRIAD HIT PROTEIN"/>
    <property type="match status" value="1"/>
</dbReference>
<dbReference type="Pfam" id="PF01230">
    <property type="entry name" value="HIT"/>
    <property type="match status" value="1"/>
</dbReference>
<dbReference type="PRINTS" id="PR00332">
    <property type="entry name" value="HISTRIAD"/>
</dbReference>
<dbReference type="SUPFAM" id="SSF54197">
    <property type="entry name" value="HIT-like"/>
    <property type="match status" value="1"/>
</dbReference>
<dbReference type="PROSITE" id="PS00892">
    <property type="entry name" value="HIT_1"/>
    <property type="match status" value="1"/>
</dbReference>
<dbReference type="PROSITE" id="PS51084">
    <property type="entry name" value="HIT_2"/>
    <property type="match status" value="1"/>
</dbReference>
<organism>
    <name type="scientific">Azospirillum brasilense</name>
    <dbReference type="NCBI Taxonomy" id="192"/>
    <lineage>
        <taxon>Bacteria</taxon>
        <taxon>Pseudomonadati</taxon>
        <taxon>Pseudomonadota</taxon>
        <taxon>Alphaproteobacteria</taxon>
        <taxon>Rhodospirillales</taxon>
        <taxon>Azospirillaceae</taxon>
        <taxon>Azospirillum</taxon>
    </lineage>
</organism>
<feature type="chain" id="PRO_0000109810" description="Uncharacterized 13.2 kDa HIT-like protein in hisE 3'region">
    <location>
        <begin position="1"/>
        <end position="122"/>
    </location>
</feature>
<feature type="domain" description="HIT" evidence="1">
    <location>
        <begin position="10"/>
        <end position="120"/>
    </location>
</feature>
<feature type="short sequence motif" description="Histidine triad motif">
    <location>
        <begin position="104"/>
        <end position="108"/>
    </location>
</feature>
<accession>P26724</accession>
<protein>
    <recommendedName>
        <fullName>Uncharacterized 13.2 kDa HIT-like protein in hisE 3'region</fullName>
    </recommendedName>
    <alternativeName>
        <fullName>ORF2</fullName>
    </alternativeName>
</protein>
<sequence>MAKTYDPNNVFARILRGEIPCKKVLETEHALAFHDINPQAPTHILVIPKGAYVDMDDFSARATEAEIAGLFRAVGEVARGAGAAEPGYRILSNCGEDANQEVPHLHIHVFAGRRLGPMITKG</sequence>
<evidence type="ECO:0000255" key="1">
    <source>
        <dbReference type="PROSITE-ProRule" id="PRU00464"/>
    </source>
</evidence>
<name>YHIT_AZOBR</name>
<proteinExistence type="predicted"/>
<reference key="1">
    <citation type="journal article" date="1989" name="Mol. Gen. Genet.">
        <title>Cloning of histidine genes of Azospirillum brasilense: organization of the ABFH gene cluster and nucleotide sequence of the hisB gene.</title>
        <authorList>
            <person name="Fani R."/>
            <person name="Bazzicalupo M."/>
            <person name="Damiani G."/>
            <person name="Bianchi A."/>
            <person name="Schipani C."/>
            <person name="Sgaramella V."/>
            <person name="Polsinelli M."/>
        </authorList>
    </citation>
    <scope>NUCLEOTIDE SEQUENCE [GENOMIC DNA]</scope>
    <source>
        <strain>Sp6</strain>
    </source>
</reference>
<reference key="2">
    <citation type="journal article" date="1992" name="DNA Seq.">
        <title>The HIT protein family: a new family of proteins present in prokaryotes, yeast and mammals.</title>
        <authorList>
            <person name="Seraphin B."/>
        </authorList>
    </citation>
    <scope>SIMILARITY TO OTHER MEMBERS OF THE HIT FAMILY</scope>
</reference>